<protein>
    <recommendedName>
        <fullName evidence="1">SsrA-binding protein</fullName>
    </recommendedName>
    <alternativeName>
        <fullName evidence="1">Small protein B</fullName>
    </alternativeName>
</protein>
<gene>
    <name evidence="1" type="primary">smpB</name>
    <name type="ordered locus">Ajs_2552</name>
</gene>
<proteinExistence type="inferred from homology"/>
<comment type="function">
    <text evidence="1">Required for rescue of stalled ribosomes mediated by trans-translation. Binds to transfer-messenger RNA (tmRNA), required for stable association of tmRNA with ribosomes. tmRNA and SmpB together mimic tRNA shape, replacing the anticodon stem-loop with SmpB. tmRNA is encoded by the ssrA gene; the 2 termini fold to resemble tRNA(Ala) and it encodes a 'tag peptide', a short internal open reading frame. During trans-translation Ala-aminoacylated tmRNA acts like a tRNA, entering the A-site of stalled ribosomes, displacing the stalled mRNA. The ribosome then switches to translate the ORF on the tmRNA; the nascent peptide is terminated with the 'tag peptide' encoded by the tmRNA and targeted for degradation. The ribosome is freed to recommence translation, which seems to be the essential function of trans-translation.</text>
</comment>
<comment type="subcellular location">
    <subcellularLocation>
        <location evidence="1">Cytoplasm</location>
    </subcellularLocation>
    <text evidence="1">The tmRNA-SmpB complex associates with stalled 70S ribosomes.</text>
</comment>
<comment type="similarity">
    <text evidence="1">Belongs to the SmpB family.</text>
</comment>
<sequence>MAKKPDTSSRIADNKKAAYNYFFEERYEAGLVLHGWEVKALREGKVQLTDGYVIIKDGELFLIGCQINPLKTASTHVSPDAARIKKLLMHKDEIRRLIGKVEQKGYTLVPLNLHWKDGRAKCEIALAKGKAEHDKRDTIKEREGKREVERVMKSRHR</sequence>
<organism>
    <name type="scientific">Acidovorax sp. (strain JS42)</name>
    <dbReference type="NCBI Taxonomy" id="232721"/>
    <lineage>
        <taxon>Bacteria</taxon>
        <taxon>Pseudomonadati</taxon>
        <taxon>Pseudomonadota</taxon>
        <taxon>Betaproteobacteria</taxon>
        <taxon>Burkholderiales</taxon>
        <taxon>Comamonadaceae</taxon>
        <taxon>Acidovorax</taxon>
    </lineage>
</organism>
<accession>A1W8Y5</accession>
<keyword id="KW-0963">Cytoplasm</keyword>
<keyword id="KW-0694">RNA-binding</keyword>
<name>SSRP_ACISJ</name>
<evidence type="ECO:0000255" key="1">
    <source>
        <dbReference type="HAMAP-Rule" id="MF_00023"/>
    </source>
</evidence>
<evidence type="ECO:0000256" key="2">
    <source>
        <dbReference type="SAM" id="MobiDB-lite"/>
    </source>
</evidence>
<dbReference type="EMBL" id="CP000539">
    <property type="protein sequence ID" value="ABM42710.1"/>
    <property type="molecule type" value="Genomic_DNA"/>
</dbReference>
<dbReference type="SMR" id="A1W8Y5"/>
<dbReference type="STRING" id="232721.Ajs_2552"/>
<dbReference type="KEGG" id="ajs:Ajs_2552"/>
<dbReference type="eggNOG" id="COG0691">
    <property type="taxonomic scope" value="Bacteria"/>
</dbReference>
<dbReference type="HOGENOM" id="CLU_108953_3_0_4"/>
<dbReference type="Proteomes" id="UP000000645">
    <property type="component" value="Chromosome"/>
</dbReference>
<dbReference type="GO" id="GO:0005829">
    <property type="term" value="C:cytosol"/>
    <property type="evidence" value="ECO:0007669"/>
    <property type="project" value="TreeGrafter"/>
</dbReference>
<dbReference type="GO" id="GO:0003723">
    <property type="term" value="F:RNA binding"/>
    <property type="evidence" value="ECO:0007669"/>
    <property type="project" value="UniProtKB-UniRule"/>
</dbReference>
<dbReference type="GO" id="GO:0070929">
    <property type="term" value="P:trans-translation"/>
    <property type="evidence" value="ECO:0007669"/>
    <property type="project" value="UniProtKB-UniRule"/>
</dbReference>
<dbReference type="CDD" id="cd09294">
    <property type="entry name" value="SmpB"/>
    <property type="match status" value="1"/>
</dbReference>
<dbReference type="Gene3D" id="2.40.280.10">
    <property type="match status" value="1"/>
</dbReference>
<dbReference type="HAMAP" id="MF_00023">
    <property type="entry name" value="SmpB"/>
    <property type="match status" value="1"/>
</dbReference>
<dbReference type="InterPro" id="IPR023620">
    <property type="entry name" value="SmpB"/>
</dbReference>
<dbReference type="InterPro" id="IPR000037">
    <property type="entry name" value="SsrA-bd_prot"/>
</dbReference>
<dbReference type="InterPro" id="IPR020081">
    <property type="entry name" value="SsrA-bd_prot_CS"/>
</dbReference>
<dbReference type="NCBIfam" id="NF003843">
    <property type="entry name" value="PRK05422.1"/>
    <property type="match status" value="1"/>
</dbReference>
<dbReference type="NCBIfam" id="TIGR00086">
    <property type="entry name" value="smpB"/>
    <property type="match status" value="1"/>
</dbReference>
<dbReference type="PANTHER" id="PTHR30308:SF2">
    <property type="entry name" value="SSRA-BINDING PROTEIN"/>
    <property type="match status" value="1"/>
</dbReference>
<dbReference type="PANTHER" id="PTHR30308">
    <property type="entry name" value="TMRNA-BINDING COMPONENT OF TRANS-TRANSLATION TAGGING COMPLEX"/>
    <property type="match status" value="1"/>
</dbReference>
<dbReference type="Pfam" id="PF01668">
    <property type="entry name" value="SmpB"/>
    <property type="match status" value="1"/>
</dbReference>
<dbReference type="SUPFAM" id="SSF74982">
    <property type="entry name" value="Small protein B (SmpB)"/>
    <property type="match status" value="1"/>
</dbReference>
<dbReference type="PROSITE" id="PS01317">
    <property type="entry name" value="SSRP"/>
    <property type="match status" value="1"/>
</dbReference>
<reference key="1">
    <citation type="submission" date="2006-12" db="EMBL/GenBank/DDBJ databases">
        <title>Complete sequence of chromosome 1 of Acidovorax sp. JS42.</title>
        <authorList>
            <person name="Copeland A."/>
            <person name="Lucas S."/>
            <person name="Lapidus A."/>
            <person name="Barry K."/>
            <person name="Detter J.C."/>
            <person name="Glavina del Rio T."/>
            <person name="Dalin E."/>
            <person name="Tice H."/>
            <person name="Pitluck S."/>
            <person name="Chertkov O."/>
            <person name="Brettin T."/>
            <person name="Bruce D."/>
            <person name="Han C."/>
            <person name="Tapia R."/>
            <person name="Gilna P."/>
            <person name="Schmutz J."/>
            <person name="Larimer F."/>
            <person name="Land M."/>
            <person name="Hauser L."/>
            <person name="Kyrpides N."/>
            <person name="Kim E."/>
            <person name="Stahl D."/>
            <person name="Richardson P."/>
        </authorList>
    </citation>
    <scope>NUCLEOTIDE SEQUENCE [LARGE SCALE GENOMIC DNA]</scope>
    <source>
        <strain>JS42</strain>
    </source>
</reference>
<feature type="chain" id="PRO_1000001990" description="SsrA-binding protein">
    <location>
        <begin position="1"/>
        <end position="157"/>
    </location>
</feature>
<feature type="region of interest" description="Disordered" evidence="2">
    <location>
        <begin position="130"/>
        <end position="157"/>
    </location>
</feature>